<protein>
    <recommendedName>
        <fullName>O-phosphoserine--tRNA(Cys) ligase</fullName>
        <shortName>O-phosphoserine--tRNA ligase</shortName>
        <ecNumber>6.1.1.27</ecNumber>
    </recommendedName>
    <alternativeName>
        <fullName>Non-canonical O-phosphoseryl-tRNA(Cys) synthetase</fullName>
    </alternativeName>
    <alternativeName>
        <fullName>O-phosphoseryl-tRNA(Cys) synthetase</fullName>
        <shortName>SepRS</shortName>
    </alternativeName>
</protein>
<keyword id="KW-0002">3D-structure</keyword>
<keyword id="KW-0030">Aminoacyl-tRNA synthetase</keyword>
<keyword id="KW-0067">ATP-binding</keyword>
<keyword id="KW-0436">Ligase</keyword>
<keyword id="KW-0547">Nucleotide-binding</keyword>
<keyword id="KW-0648">Protein biosynthesis</keyword>
<keyword id="KW-1185">Reference proteome</keyword>
<gene>
    <name type="primary">sepS</name>
    <name type="ordered locus">MJ1660</name>
</gene>
<comment type="function">
    <text evidence="2">Catalyzes the attachment of O-phosphoserine (Sep) to tRNA(Cys).</text>
</comment>
<comment type="catalytic activity">
    <reaction>
        <text>tRNA(Cys) + O-phospho-L-serine + ATP = O-phospho-L-seryl-tRNA(Cys) + AMP + diphosphate</text>
        <dbReference type="Rhea" id="RHEA:25678"/>
        <dbReference type="Rhea" id="RHEA-COMP:9661"/>
        <dbReference type="Rhea" id="RHEA-COMP:9719"/>
        <dbReference type="ChEBI" id="CHEBI:30616"/>
        <dbReference type="ChEBI" id="CHEBI:33019"/>
        <dbReference type="ChEBI" id="CHEBI:57524"/>
        <dbReference type="ChEBI" id="CHEBI:78442"/>
        <dbReference type="ChEBI" id="CHEBI:78551"/>
        <dbReference type="ChEBI" id="CHEBI:456215"/>
        <dbReference type="EC" id="6.1.1.27"/>
    </reaction>
</comment>
<comment type="biophysicochemical properties">
    <kinetics>
        <KM evidence="4">0.7 uM for tRNA(Cys) (at 60 degrees Celsius and pH 6.0)</KM>
    </kinetics>
</comment>
<comment type="subunit">
    <text evidence="3 4">Homotetramer. Interacts with SepCysS.</text>
</comment>
<comment type="interaction">
    <interactant intactId="EBI-15698391">
        <id>Q59054</id>
    </interactant>
    <interactant intactId="EBI-15698426">
        <id>Q59072</id>
        <label>pscS</label>
    </interactant>
    <organismsDiffer>false</organismsDiffer>
    <experiments>4</experiments>
</comment>
<comment type="similarity">
    <text evidence="5">Belongs to the class-II aminoacyl-tRNA synthetase family. O-phosphoseryl-tRNA(Cys) synthetase subfamily.</text>
</comment>
<comment type="sequence caution" evidence="5">
    <conflict type="erroneous initiation">
        <sequence resource="EMBL-CDS" id="AAB99678"/>
    </conflict>
</comment>
<organism>
    <name type="scientific">Methanocaldococcus jannaschii (strain ATCC 43067 / DSM 2661 / JAL-1 / JCM 10045 / NBRC 100440)</name>
    <name type="common">Methanococcus jannaschii</name>
    <dbReference type="NCBI Taxonomy" id="243232"/>
    <lineage>
        <taxon>Archaea</taxon>
        <taxon>Methanobacteriati</taxon>
        <taxon>Methanobacteriota</taxon>
        <taxon>Methanomada group</taxon>
        <taxon>Methanococci</taxon>
        <taxon>Methanococcales</taxon>
        <taxon>Methanocaldococcaceae</taxon>
        <taxon>Methanocaldococcus</taxon>
    </lineage>
</organism>
<proteinExistence type="evidence at protein level"/>
<sequence>MRFDIKKVLELAEKDFETAWRETRALIKDKHIDNKYPRLKPVYGKPHPVMETIERLRQAYLRMGFEEMINPVIVDEMEIYKQFGPEAMAVLDRCFYLAGLPRPDVGLGNEKVEIIKNLGIDIDEEKKERLREVLHLYKKGAIDGDDLVFEIAKALNVSNEMGLKVLETAFPEFKDLKPESTTLTLRSHMTSGWFITLSSLIKKRKLPLKLFSIDRCFRREQREDRSHLMSYHSASCVVVGEDVSVDDGKVVAEGLLAQFGFTKFKFKPDEKKSKYYTPETQTEVYAYHPKLGEWIEVATFGVYSPIALAKYNIDVPVMNLGLGVERLAMIIYGYEDVRAMVYPQFYEYRLSDRDIAGMIRVDKVPILDEFYNFANELIDICIANKDKESPCSVEVKREFNFNGERRVIKVEIFENEPNKKLLGPSVLNEVYVYDGNIYGIPPTFEGVKEQYIPILKKAKEEGVSTNIRYIDGIIYKLVAKIEEALVSNVDEFKFRVPIVRSLSDINLKIDELALKQIMGENKVIDVRGPVFLNAKVEIK</sequence>
<evidence type="ECO:0000250" key="1"/>
<evidence type="ECO:0000269" key="2">
    <source>
    </source>
</evidence>
<evidence type="ECO:0000269" key="3">
    <source>
    </source>
</evidence>
<evidence type="ECO:0000269" key="4">
    <source>
    </source>
</evidence>
<evidence type="ECO:0000305" key="5"/>
<evidence type="ECO:0007829" key="6">
    <source>
        <dbReference type="PDB" id="5X6C"/>
    </source>
</evidence>
<reference key="1">
    <citation type="journal article" date="1996" name="Science">
        <title>Complete genome sequence of the methanogenic archaeon, Methanococcus jannaschii.</title>
        <authorList>
            <person name="Bult C.J."/>
            <person name="White O."/>
            <person name="Olsen G.J."/>
            <person name="Zhou L."/>
            <person name="Fleischmann R.D."/>
            <person name="Sutton G.G."/>
            <person name="Blake J.A."/>
            <person name="FitzGerald L.M."/>
            <person name="Clayton R.A."/>
            <person name="Gocayne J.D."/>
            <person name="Kerlavage A.R."/>
            <person name="Dougherty B.A."/>
            <person name="Tomb J.-F."/>
            <person name="Adams M.D."/>
            <person name="Reich C.I."/>
            <person name="Overbeek R."/>
            <person name="Kirkness E.F."/>
            <person name="Weinstock K.G."/>
            <person name="Merrick J.M."/>
            <person name="Glodek A."/>
            <person name="Scott J.L."/>
            <person name="Geoghagen N.S.M."/>
            <person name="Weidman J.F."/>
            <person name="Fuhrmann J.L."/>
            <person name="Nguyen D."/>
            <person name="Utterback T.R."/>
            <person name="Kelley J.M."/>
            <person name="Peterson J.D."/>
            <person name="Sadow P.W."/>
            <person name="Hanna M.C."/>
            <person name="Cotton M.D."/>
            <person name="Roberts K.M."/>
            <person name="Hurst M.A."/>
            <person name="Kaine B.P."/>
            <person name="Borodovsky M."/>
            <person name="Klenk H.-P."/>
            <person name="Fraser C.M."/>
            <person name="Smith H.O."/>
            <person name="Woese C.R."/>
            <person name="Venter J.C."/>
        </authorList>
    </citation>
    <scope>NUCLEOTIDE SEQUENCE [LARGE SCALE GENOMIC DNA]</scope>
    <source>
        <strain>ATCC 43067 / DSM 2661 / JAL-1 / JCM 10045 / NBRC 100440</strain>
    </source>
</reference>
<reference key="2">
    <citation type="journal article" date="2005" name="Science">
        <title>RNA-dependent cysteine biosynthesis in archaea.</title>
        <authorList>
            <person name="Sauerwald A."/>
            <person name="Zhu W."/>
            <person name="Major T.A."/>
            <person name="Roy H."/>
            <person name="Palioura S."/>
            <person name="Jahn D."/>
            <person name="Whitman W.B."/>
            <person name="Yates J.R. III"/>
            <person name="Ibba M."/>
            <person name="Soell D."/>
        </authorList>
    </citation>
    <scope>FUNCTION</scope>
</reference>
<reference key="3">
    <citation type="journal article" date="2008" name="Nat. Struct. Mol. Biol.">
        <title>Aminoacylation of tRNA with phosphoserine for synthesis of cysteinyl-tRNA(Cys).</title>
        <authorList>
            <person name="Zhang C.-M."/>
            <person name="Liu C."/>
            <person name="Slater S."/>
            <person name="Hou Y.-M."/>
        </authorList>
    </citation>
    <scope>INTERACTION WITH SEPCYSS</scope>
    <scope>BIOPHYSICOCHEMICAL PROPERTIES</scope>
    <scope>SUBUNIT</scope>
</reference>
<reference key="4">
    <citation type="journal article" date="2007" name="Nat. Struct. Mol. Biol.">
        <title>Structural insights into the first step of RNA-dependent cysteine biosynthesis in archaea.</title>
        <authorList>
            <person name="Fukunaga R."/>
            <person name="Yokoyama S."/>
        </authorList>
    </citation>
    <scope>X-RAY CRYSTALLOGRAPHY (3.6 ANGSTROMS)</scope>
    <scope>SUBUNIT</scope>
</reference>
<feature type="chain" id="PRO_0000126829" description="O-phosphoserine--tRNA(Cys) ligase">
    <location>
        <begin position="1"/>
        <end position="539"/>
    </location>
</feature>
<feature type="binding site" evidence="1">
    <location>
        <begin position="188"/>
        <end position="190"/>
    </location>
    <ligand>
        <name>substrate</name>
    </ligand>
</feature>
<feature type="binding site" evidence="1">
    <location>
        <begin position="233"/>
        <end position="235"/>
    </location>
    <ligand>
        <name>substrate</name>
    </ligand>
</feature>
<feature type="binding site" evidence="1">
    <location>
        <begin position="275"/>
        <end position="276"/>
    </location>
    <ligand>
        <name>substrate</name>
    </ligand>
</feature>
<feature type="binding site" evidence="1">
    <location>
        <position position="319"/>
    </location>
    <ligand>
        <name>substrate</name>
    </ligand>
</feature>
<feature type="helix" evidence="6">
    <location>
        <begin position="5"/>
        <end position="14"/>
    </location>
</feature>
<feature type="helix" evidence="6">
    <location>
        <begin position="16"/>
        <end position="22"/>
    </location>
</feature>
<feature type="helix" evidence="6">
    <location>
        <begin position="23"/>
        <end position="26"/>
    </location>
</feature>
<feature type="helix" evidence="6">
    <location>
        <begin position="32"/>
        <end position="34"/>
    </location>
</feature>
<feature type="turn" evidence="6">
    <location>
        <begin position="36"/>
        <end position="38"/>
    </location>
</feature>
<feature type="helix" evidence="6">
    <location>
        <begin position="48"/>
        <end position="61"/>
    </location>
</feature>
<feature type="turn" evidence="6">
    <location>
        <begin position="62"/>
        <end position="64"/>
    </location>
</feature>
<feature type="strand" evidence="6">
    <location>
        <begin position="72"/>
        <end position="75"/>
    </location>
</feature>
<feature type="helix" evidence="6">
    <location>
        <begin position="76"/>
        <end position="83"/>
    </location>
</feature>
<feature type="helix" evidence="6">
    <location>
        <begin position="84"/>
        <end position="86"/>
    </location>
</feature>
<feature type="helix" evidence="6">
    <location>
        <begin position="87"/>
        <end position="90"/>
    </location>
</feature>
<feature type="strand" evidence="6">
    <location>
        <begin position="96"/>
        <end position="99"/>
    </location>
</feature>
<feature type="helix" evidence="6">
    <location>
        <begin position="110"/>
        <end position="117"/>
    </location>
</feature>
<feature type="helix" evidence="6">
    <location>
        <begin position="124"/>
        <end position="138"/>
    </location>
</feature>
<feature type="helix" evidence="6">
    <location>
        <begin position="144"/>
        <end position="146"/>
    </location>
</feature>
<feature type="helix" evidence="6">
    <location>
        <begin position="147"/>
        <end position="155"/>
    </location>
</feature>
<feature type="helix" evidence="6">
    <location>
        <begin position="159"/>
        <end position="169"/>
    </location>
</feature>
<feature type="helix" evidence="6">
    <location>
        <begin position="171"/>
        <end position="175"/>
    </location>
</feature>
<feature type="strand" evidence="6">
    <location>
        <begin position="179"/>
        <end position="185"/>
    </location>
</feature>
<feature type="helix" evidence="6">
    <location>
        <begin position="190"/>
        <end position="200"/>
    </location>
</feature>
<feature type="helix" evidence="6">
    <location>
        <begin position="201"/>
        <end position="203"/>
    </location>
</feature>
<feature type="strand" evidence="6">
    <location>
        <begin position="208"/>
        <end position="217"/>
    </location>
</feature>
<feature type="strand" evidence="6">
    <location>
        <begin position="229"/>
        <end position="239"/>
    </location>
</feature>
<feature type="helix" evidence="6">
    <location>
        <begin position="245"/>
        <end position="257"/>
    </location>
</feature>
<feature type="turn" evidence="6">
    <location>
        <begin position="258"/>
        <end position="260"/>
    </location>
</feature>
<feature type="strand" evidence="6">
    <location>
        <begin position="264"/>
        <end position="268"/>
    </location>
</feature>
<feature type="strand" evidence="6">
    <location>
        <begin position="282"/>
        <end position="287"/>
    </location>
</feature>
<feature type="turn" evidence="6">
    <location>
        <begin position="289"/>
        <end position="291"/>
    </location>
</feature>
<feature type="strand" evidence="6">
    <location>
        <begin position="293"/>
        <end position="303"/>
    </location>
</feature>
<feature type="helix" evidence="6">
    <location>
        <begin position="305"/>
        <end position="310"/>
    </location>
</feature>
<feature type="strand" evidence="6">
    <location>
        <begin position="317"/>
        <end position="323"/>
    </location>
</feature>
<feature type="helix" evidence="6">
    <location>
        <begin position="324"/>
        <end position="332"/>
    </location>
</feature>
<feature type="helix" evidence="6">
    <location>
        <begin position="337"/>
        <end position="341"/>
    </location>
</feature>
<feature type="helix" evidence="6">
    <location>
        <begin position="343"/>
        <end position="345"/>
    </location>
</feature>
<feature type="helix" evidence="6">
    <location>
        <begin position="352"/>
        <end position="356"/>
    </location>
</feature>
<feature type="strand" evidence="6">
    <location>
        <begin position="359"/>
        <end position="361"/>
    </location>
</feature>
<feature type="helix" evidence="6">
    <location>
        <begin position="368"/>
        <end position="383"/>
    </location>
</feature>
<feature type="strand" evidence="6">
    <location>
        <begin position="388"/>
        <end position="401"/>
    </location>
</feature>
<feature type="strand" evidence="6">
    <location>
        <begin position="404"/>
        <end position="414"/>
    </location>
</feature>
<feature type="strand" evidence="6">
    <location>
        <begin position="416"/>
        <end position="418"/>
    </location>
</feature>
<feature type="strand" evidence="6">
    <location>
        <begin position="420"/>
        <end position="422"/>
    </location>
</feature>
<feature type="turn" evidence="6">
    <location>
        <begin position="424"/>
        <end position="427"/>
    </location>
</feature>
<feature type="strand" evidence="6">
    <location>
        <begin position="429"/>
        <end position="433"/>
    </location>
</feature>
<feature type="strand" evidence="6">
    <location>
        <begin position="436"/>
        <end position="440"/>
    </location>
</feature>
<feature type="helix" evidence="6">
    <location>
        <begin position="451"/>
        <end position="461"/>
    </location>
</feature>
<feature type="strand" evidence="6">
    <location>
        <begin position="462"/>
        <end position="468"/>
    </location>
</feature>
<feature type="helix" evidence="6">
    <location>
        <begin position="469"/>
        <end position="486"/>
    </location>
</feature>
<feature type="strand" evidence="6">
    <location>
        <begin position="491"/>
        <end position="499"/>
    </location>
</feature>
<feature type="helix" evidence="6">
    <location>
        <begin position="503"/>
        <end position="505"/>
    </location>
</feature>
<feature type="strand" evidence="6">
    <location>
        <begin position="507"/>
        <end position="509"/>
    </location>
</feature>
<feature type="helix" evidence="6">
    <location>
        <begin position="511"/>
        <end position="519"/>
    </location>
</feature>
<feature type="strand" evidence="6">
    <location>
        <begin position="528"/>
        <end position="539"/>
    </location>
</feature>
<accession>Q59054</accession>
<name>SEPS_METJA</name>
<dbReference type="EC" id="6.1.1.27"/>
<dbReference type="EMBL" id="L77117">
    <property type="protein sequence ID" value="AAB99678.1"/>
    <property type="status" value="ALT_INIT"/>
    <property type="molecule type" value="Genomic_DNA"/>
</dbReference>
<dbReference type="PIR" id="B64507">
    <property type="entry name" value="B64507"/>
</dbReference>
<dbReference type="RefSeq" id="WP_064496988.1">
    <property type="nucleotide sequence ID" value="NC_000909.1"/>
</dbReference>
<dbReference type="PDB" id="2DU7">
    <property type="method" value="X-ray"/>
    <property type="resolution" value="3.60 A"/>
    <property type="chains" value="A/B/C/D=1-539"/>
</dbReference>
<dbReference type="PDB" id="5X6C">
    <property type="method" value="X-ray"/>
    <property type="resolution" value="3.10 A"/>
    <property type="chains" value="A/B=1-539"/>
</dbReference>
<dbReference type="PDBsum" id="2DU7"/>
<dbReference type="PDBsum" id="5X6C"/>
<dbReference type="SMR" id="Q59054"/>
<dbReference type="DIP" id="DIP-46382N"/>
<dbReference type="FunCoup" id="Q59054">
    <property type="interactions" value="28"/>
</dbReference>
<dbReference type="IntAct" id="Q59054">
    <property type="interactions" value="1"/>
</dbReference>
<dbReference type="STRING" id="243232.MJ_1660"/>
<dbReference type="PaxDb" id="243232-MJ_1660"/>
<dbReference type="EnsemblBacteria" id="AAB99678">
    <property type="protein sequence ID" value="AAB99678"/>
    <property type="gene ID" value="MJ_1660"/>
</dbReference>
<dbReference type="GeneID" id="1452569"/>
<dbReference type="KEGG" id="mja:MJ_1660"/>
<dbReference type="eggNOG" id="arCOG00411">
    <property type="taxonomic scope" value="Archaea"/>
</dbReference>
<dbReference type="HOGENOM" id="CLU_506822_0_0_2"/>
<dbReference type="InParanoid" id="Q59054"/>
<dbReference type="OrthoDB" id="145125at2157"/>
<dbReference type="PhylomeDB" id="Q59054"/>
<dbReference type="BioCyc" id="MetaCyc:MONOMER-14996"/>
<dbReference type="BRENDA" id="6.1.1.27">
    <property type="organism ID" value="3260"/>
</dbReference>
<dbReference type="SABIO-RK" id="Q59054"/>
<dbReference type="EvolutionaryTrace" id="Q59054"/>
<dbReference type="Proteomes" id="UP000000805">
    <property type="component" value="Chromosome"/>
</dbReference>
<dbReference type="GO" id="GO:0005737">
    <property type="term" value="C:cytoplasm"/>
    <property type="evidence" value="ECO:0000318"/>
    <property type="project" value="GO_Central"/>
</dbReference>
<dbReference type="GO" id="GO:0005524">
    <property type="term" value="F:ATP binding"/>
    <property type="evidence" value="ECO:0007669"/>
    <property type="project" value="UniProtKB-UniRule"/>
</dbReference>
<dbReference type="GO" id="GO:0004826">
    <property type="term" value="F:phenylalanine-tRNA ligase activity"/>
    <property type="evidence" value="ECO:0000318"/>
    <property type="project" value="GO_Central"/>
</dbReference>
<dbReference type="GO" id="GO:0043816">
    <property type="term" value="F:phosphoserine-tRNA(Cys) ligase activity"/>
    <property type="evidence" value="ECO:0007669"/>
    <property type="project" value="UniProtKB-EC"/>
</dbReference>
<dbReference type="GO" id="GO:0000049">
    <property type="term" value="F:tRNA binding"/>
    <property type="evidence" value="ECO:0007669"/>
    <property type="project" value="InterPro"/>
</dbReference>
<dbReference type="GO" id="GO:0006432">
    <property type="term" value="P:phenylalanyl-tRNA aminoacylation"/>
    <property type="evidence" value="ECO:0000318"/>
    <property type="project" value="GO_Central"/>
</dbReference>
<dbReference type="FunFam" id="3.30.930.10:FF:000139">
    <property type="entry name" value="O-phosphoserine--tRNA(Cys) ligase"/>
    <property type="match status" value="1"/>
</dbReference>
<dbReference type="Gene3D" id="6.10.250.3340">
    <property type="match status" value="2"/>
</dbReference>
<dbReference type="Gene3D" id="6.20.250.20">
    <property type="match status" value="1"/>
</dbReference>
<dbReference type="Gene3D" id="3.30.930.10">
    <property type="entry name" value="Bira Bifunctional Protein, Domain 2"/>
    <property type="match status" value="1"/>
</dbReference>
<dbReference type="HAMAP" id="MF_01674">
    <property type="entry name" value="Sep_tRNA_synth"/>
    <property type="match status" value="1"/>
</dbReference>
<dbReference type="InterPro" id="IPR006195">
    <property type="entry name" value="aa-tRNA-synth_II"/>
</dbReference>
<dbReference type="InterPro" id="IPR045864">
    <property type="entry name" value="aa-tRNA-synth_II/BPL/LPL"/>
</dbReference>
<dbReference type="InterPro" id="IPR005246">
    <property type="entry name" value="O-Pseryl-tRNA(Cys)_ligase"/>
</dbReference>
<dbReference type="InterPro" id="IPR002319">
    <property type="entry name" value="Phenylalanyl-tRNA_Synthase"/>
</dbReference>
<dbReference type="InterPro" id="IPR041590">
    <property type="entry name" value="SepRS_C"/>
</dbReference>
<dbReference type="NCBIfam" id="TIGR00470">
    <property type="entry name" value="sepS"/>
    <property type="match status" value="1"/>
</dbReference>
<dbReference type="Pfam" id="PF18006">
    <property type="entry name" value="SepRS_C"/>
    <property type="match status" value="1"/>
</dbReference>
<dbReference type="Pfam" id="PF01409">
    <property type="entry name" value="tRNA-synt_2d"/>
    <property type="match status" value="1"/>
</dbReference>
<dbReference type="SUPFAM" id="SSF55681">
    <property type="entry name" value="Class II aaRS and biotin synthetases"/>
    <property type="match status" value="1"/>
</dbReference>
<dbReference type="PROSITE" id="PS50862">
    <property type="entry name" value="AA_TRNA_LIGASE_II"/>
    <property type="match status" value="1"/>
</dbReference>